<proteinExistence type="inferred from homology"/>
<name>RL2_PSEPK</name>
<dbReference type="EMBL" id="AE015451">
    <property type="protein sequence ID" value="AAN66087.1"/>
    <property type="molecule type" value="Genomic_DNA"/>
</dbReference>
<dbReference type="RefSeq" id="NP_742623.1">
    <property type="nucleotide sequence ID" value="NC_002947.4"/>
</dbReference>
<dbReference type="RefSeq" id="WP_003255483.1">
    <property type="nucleotide sequence ID" value="NZ_CP169744.1"/>
</dbReference>
<dbReference type="SMR" id="Q88QN2"/>
<dbReference type="STRING" id="160488.PP_0457"/>
<dbReference type="PaxDb" id="160488-PP_0457"/>
<dbReference type="GeneID" id="93675525"/>
<dbReference type="KEGG" id="ppu:PP_0457"/>
<dbReference type="PATRIC" id="fig|160488.4.peg.489"/>
<dbReference type="eggNOG" id="COG0090">
    <property type="taxonomic scope" value="Bacteria"/>
</dbReference>
<dbReference type="HOGENOM" id="CLU_036235_2_1_6"/>
<dbReference type="OrthoDB" id="9778722at2"/>
<dbReference type="PhylomeDB" id="Q88QN2"/>
<dbReference type="BioCyc" id="PPUT160488:G1G01-503-MONOMER"/>
<dbReference type="Proteomes" id="UP000000556">
    <property type="component" value="Chromosome"/>
</dbReference>
<dbReference type="GO" id="GO:0015934">
    <property type="term" value="C:large ribosomal subunit"/>
    <property type="evidence" value="ECO:0007669"/>
    <property type="project" value="InterPro"/>
</dbReference>
<dbReference type="GO" id="GO:0019843">
    <property type="term" value="F:rRNA binding"/>
    <property type="evidence" value="ECO:0007669"/>
    <property type="project" value="UniProtKB-UniRule"/>
</dbReference>
<dbReference type="GO" id="GO:0003735">
    <property type="term" value="F:structural constituent of ribosome"/>
    <property type="evidence" value="ECO:0007669"/>
    <property type="project" value="InterPro"/>
</dbReference>
<dbReference type="GO" id="GO:0016740">
    <property type="term" value="F:transferase activity"/>
    <property type="evidence" value="ECO:0007669"/>
    <property type="project" value="InterPro"/>
</dbReference>
<dbReference type="GO" id="GO:0002181">
    <property type="term" value="P:cytoplasmic translation"/>
    <property type="evidence" value="ECO:0007669"/>
    <property type="project" value="TreeGrafter"/>
</dbReference>
<dbReference type="FunFam" id="2.30.30.30:FF:000001">
    <property type="entry name" value="50S ribosomal protein L2"/>
    <property type="match status" value="1"/>
</dbReference>
<dbReference type="FunFam" id="2.40.50.140:FF:000003">
    <property type="entry name" value="50S ribosomal protein L2"/>
    <property type="match status" value="1"/>
</dbReference>
<dbReference type="FunFam" id="4.10.950.10:FF:000001">
    <property type="entry name" value="50S ribosomal protein L2"/>
    <property type="match status" value="1"/>
</dbReference>
<dbReference type="Gene3D" id="2.30.30.30">
    <property type="match status" value="1"/>
</dbReference>
<dbReference type="Gene3D" id="2.40.50.140">
    <property type="entry name" value="Nucleic acid-binding proteins"/>
    <property type="match status" value="1"/>
</dbReference>
<dbReference type="Gene3D" id="4.10.950.10">
    <property type="entry name" value="Ribosomal protein L2, domain 3"/>
    <property type="match status" value="1"/>
</dbReference>
<dbReference type="HAMAP" id="MF_01320_B">
    <property type="entry name" value="Ribosomal_uL2_B"/>
    <property type="match status" value="1"/>
</dbReference>
<dbReference type="InterPro" id="IPR012340">
    <property type="entry name" value="NA-bd_OB-fold"/>
</dbReference>
<dbReference type="InterPro" id="IPR014722">
    <property type="entry name" value="Rib_uL2_dom2"/>
</dbReference>
<dbReference type="InterPro" id="IPR002171">
    <property type="entry name" value="Ribosomal_uL2"/>
</dbReference>
<dbReference type="InterPro" id="IPR005880">
    <property type="entry name" value="Ribosomal_uL2_bac/org-type"/>
</dbReference>
<dbReference type="InterPro" id="IPR022669">
    <property type="entry name" value="Ribosomal_uL2_C"/>
</dbReference>
<dbReference type="InterPro" id="IPR022671">
    <property type="entry name" value="Ribosomal_uL2_CS"/>
</dbReference>
<dbReference type="InterPro" id="IPR014726">
    <property type="entry name" value="Ribosomal_uL2_dom3"/>
</dbReference>
<dbReference type="InterPro" id="IPR022666">
    <property type="entry name" value="Ribosomal_uL2_RNA-bd_dom"/>
</dbReference>
<dbReference type="InterPro" id="IPR008991">
    <property type="entry name" value="Translation_prot_SH3-like_sf"/>
</dbReference>
<dbReference type="NCBIfam" id="TIGR01171">
    <property type="entry name" value="rplB_bact"/>
    <property type="match status" value="1"/>
</dbReference>
<dbReference type="PANTHER" id="PTHR13691:SF5">
    <property type="entry name" value="LARGE RIBOSOMAL SUBUNIT PROTEIN UL2M"/>
    <property type="match status" value="1"/>
</dbReference>
<dbReference type="PANTHER" id="PTHR13691">
    <property type="entry name" value="RIBOSOMAL PROTEIN L2"/>
    <property type="match status" value="1"/>
</dbReference>
<dbReference type="Pfam" id="PF00181">
    <property type="entry name" value="Ribosomal_L2"/>
    <property type="match status" value="1"/>
</dbReference>
<dbReference type="Pfam" id="PF03947">
    <property type="entry name" value="Ribosomal_L2_C"/>
    <property type="match status" value="1"/>
</dbReference>
<dbReference type="PIRSF" id="PIRSF002158">
    <property type="entry name" value="Ribosomal_L2"/>
    <property type="match status" value="1"/>
</dbReference>
<dbReference type="SMART" id="SM01383">
    <property type="entry name" value="Ribosomal_L2"/>
    <property type="match status" value="1"/>
</dbReference>
<dbReference type="SMART" id="SM01382">
    <property type="entry name" value="Ribosomal_L2_C"/>
    <property type="match status" value="1"/>
</dbReference>
<dbReference type="SUPFAM" id="SSF50249">
    <property type="entry name" value="Nucleic acid-binding proteins"/>
    <property type="match status" value="1"/>
</dbReference>
<dbReference type="SUPFAM" id="SSF50104">
    <property type="entry name" value="Translation proteins SH3-like domain"/>
    <property type="match status" value="1"/>
</dbReference>
<dbReference type="PROSITE" id="PS00467">
    <property type="entry name" value="RIBOSOMAL_L2"/>
    <property type="match status" value="1"/>
</dbReference>
<keyword id="KW-1185">Reference proteome</keyword>
<keyword id="KW-0687">Ribonucleoprotein</keyword>
<keyword id="KW-0689">Ribosomal protein</keyword>
<keyword id="KW-0694">RNA-binding</keyword>
<keyword id="KW-0699">rRNA-binding</keyword>
<reference key="1">
    <citation type="journal article" date="2002" name="Environ. Microbiol.">
        <title>Complete genome sequence and comparative analysis of the metabolically versatile Pseudomonas putida KT2440.</title>
        <authorList>
            <person name="Nelson K.E."/>
            <person name="Weinel C."/>
            <person name="Paulsen I.T."/>
            <person name="Dodson R.J."/>
            <person name="Hilbert H."/>
            <person name="Martins dos Santos V.A.P."/>
            <person name="Fouts D.E."/>
            <person name="Gill S.R."/>
            <person name="Pop M."/>
            <person name="Holmes M."/>
            <person name="Brinkac L.M."/>
            <person name="Beanan M.J."/>
            <person name="DeBoy R.T."/>
            <person name="Daugherty S.C."/>
            <person name="Kolonay J.F."/>
            <person name="Madupu R."/>
            <person name="Nelson W.C."/>
            <person name="White O."/>
            <person name="Peterson J.D."/>
            <person name="Khouri H.M."/>
            <person name="Hance I."/>
            <person name="Chris Lee P."/>
            <person name="Holtzapple E.K."/>
            <person name="Scanlan D."/>
            <person name="Tran K."/>
            <person name="Moazzez A."/>
            <person name="Utterback T.R."/>
            <person name="Rizzo M."/>
            <person name="Lee K."/>
            <person name="Kosack D."/>
            <person name="Moestl D."/>
            <person name="Wedler H."/>
            <person name="Lauber J."/>
            <person name="Stjepandic D."/>
            <person name="Hoheisel J."/>
            <person name="Straetz M."/>
            <person name="Heim S."/>
            <person name="Kiewitz C."/>
            <person name="Eisen J.A."/>
            <person name="Timmis K.N."/>
            <person name="Duesterhoeft A."/>
            <person name="Tuemmler B."/>
            <person name="Fraser C.M."/>
        </authorList>
    </citation>
    <scope>NUCLEOTIDE SEQUENCE [LARGE SCALE GENOMIC DNA]</scope>
    <source>
        <strain>ATCC 47054 / DSM 6125 / CFBP 8728 / NCIMB 11950 / KT2440</strain>
    </source>
</reference>
<accession>Q88QN2</accession>
<comment type="function">
    <text evidence="1">One of the primary rRNA binding proteins. Required for association of the 30S and 50S subunits to form the 70S ribosome, for tRNA binding and peptide bond formation. It has been suggested to have peptidyltransferase activity; this is somewhat controversial. Makes several contacts with the 16S rRNA in the 70S ribosome.</text>
</comment>
<comment type="subunit">
    <text evidence="1">Part of the 50S ribosomal subunit. Forms a bridge to the 30S subunit in the 70S ribosome.</text>
</comment>
<comment type="similarity">
    <text evidence="1">Belongs to the universal ribosomal protein uL2 family.</text>
</comment>
<organism>
    <name type="scientific">Pseudomonas putida (strain ATCC 47054 / DSM 6125 / CFBP 8728 / NCIMB 11950 / KT2440)</name>
    <dbReference type="NCBI Taxonomy" id="160488"/>
    <lineage>
        <taxon>Bacteria</taxon>
        <taxon>Pseudomonadati</taxon>
        <taxon>Pseudomonadota</taxon>
        <taxon>Gammaproteobacteria</taxon>
        <taxon>Pseudomonadales</taxon>
        <taxon>Pseudomonadaceae</taxon>
        <taxon>Pseudomonas</taxon>
    </lineage>
</organism>
<gene>
    <name evidence="1" type="primary">rplB</name>
    <name type="ordered locus">PP_0457</name>
</gene>
<feature type="chain" id="PRO_0000129600" description="Large ribosomal subunit protein uL2">
    <location>
        <begin position="1"/>
        <end position="274"/>
    </location>
</feature>
<feature type="region of interest" description="Disordered" evidence="2">
    <location>
        <begin position="28"/>
        <end position="55"/>
    </location>
</feature>
<feature type="region of interest" description="Disordered" evidence="2">
    <location>
        <begin position="224"/>
        <end position="274"/>
    </location>
</feature>
<evidence type="ECO:0000255" key="1">
    <source>
        <dbReference type="HAMAP-Rule" id="MF_01320"/>
    </source>
</evidence>
<evidence type="ECO:0000256" key="2">
    <source>
        <dbReference type="SAM" id="MobiDB-lite"/>
    </source>
</evidence>
<evidence type="ECO:0000305" key="3"/>
<sequence length="274" mass="29669">MAIVKCKPTSPGRRFVVKVVNKELHKGAPHAPLIEKKSKSGGRNNNGRITTRHVGGGHKQHYRLVDFRRNDKDGIPATVERIEYDPNRTAHIALLCYADGERRYIIAPKGVSAGDQLIAGALAPIKAGNSLQLRNIPVGSTIHGIELKPGKGAQIARSAGASAQLIAREGVYVTLRLRSGEMRKVLAECRATLGEVSNSEHSLRSLGKAGAKRWRGVRPTVRGVAMNPVDHPHGGGEGRTSGGRHPVSPWGFPTKGAKTRGNKRTDNMIVRRRK</sequence>
<protein>
    <recommendedName>
        <fullName evidence="1">Large ribosomal subunit protein uL2</fullName>
    </recommendedName>
    <alternativeName>
        <fullName evidence="3">50S ribosomal protein L2</fullName>
    </alternativeName>
</protein>